<dbReference type="EMBL" id="FO080986">
    <property type="protein sequence ID" value="CCD68266.1"/>
    <property type="molecule type" value="Genomic_DNA"/>
</dbReference>
<dbReference type="RefSeq" id="NP_490664.2">
    <property type="nucleotide sequence ID" value="NM_058263.5"/>
</dbReference>
<dbReference type="SMR" id="Q9N4D6"/>
<dbReference type="BioGRID" id="37099">
    <property type="interactions" value="2"/>
</dbReference>
<dbReference type="FunCoup" id="Q9N4D6">
    <property type="interactions" value="1246"/>
</dbReference>
<dbReference type="STRING" id="6239.Y74C9A.5.1"/>
<dbReference type="PaxDb" id="6239-Y74C9A.5.2"/>
<dbReference type="EnsemblMetazoa" id="Y74C9A.5.1">
    <property type="protein sequence ID" value="Y74C9A.5.1"/>
    <property type="gene ID" value="WBGene00022279"/>
</dbReference>
<dbReference type="EnsemblMetazoa" id="Y74C9A.5.2">
    <property type="protein sequence ID" value="Y74C9A.5.2"/>
    <property type="gene ID" value="WBGene00022279"/>
</dbReference>
<dbReference type="GeneID" id="171593"/>
<dbReference type="KEGG" id="cel:CELE_Y74C9A.5"/>
<dbReference type="UCSC" id="Y74C9A.5">
    <property type="organism name" value="c. elegans"/>
</dbReference>
<dbReference type="AGR" id="WB:WBGene00022279"/>
<dbReference type="CTD" id="171593"/>
<dbReference type="WormBase" id="Y74C9A.5">
    <property type="protein sequence ID" value="CE40291"/>
    <property type="gene ID" value="WBGene00022279"/>
    <property type="gene designation" value="sesn-1"/>
</dbReference>
<dbReference type="eggNOG" id="KOG3746">
    <property type="taxonomic scope" value="Eukaryota"/>
</dbReference>
<dbReference type="GeneTree" id="ENSGT00950000183168"/>
<dbReference type="HOGENOM" id="CLU_489386_0_0_1"/>
<dbReference type="InParanoid" id="Q9N4D6"/>
<dbReference type="OMA" id="HAIIVLC"/>
<dbReference type="OrthoDB" id="337464at2759"/>
<dbReference type="PhylomeDB" id="Q9N4D6"/>
<dbReference type="Reactome" id="R-CEL-5628897">
    <property type="pathway name" value="TP53 Regulates Metabolic Genes"/>
</dbReference>
<dbReference type="Reactome" id="R-CEL-9755511">
    <property type="pathway name" value="KEAP1-NFE2L2 pathway"/>
</dbReference>
<dbReference type="PRO" id="PR:Q9N4D6"/>
<dbReference type="Proteomes" id="UP000001940">
    <property type="component" value="Chromosome I"/>
</dbReference>
<dbReference type="Bgee" id="WBGene00022279">
    <property type="expression patterns" value="Expressed in larva and 3 other cell types or tissues"/>
</dbReference>
<dbReference type="GO" id="GO:0005737">
    <property type="term" value="C:cytoplasm"/>
    <property type="evidence" value="ECO:0007669"/>
    <property type="project" value="UniProtKB-SubCell"/>
</dbReference>
<dbReference type="GO" id="GO:0005634">
    <property type="term" value="C:nucleus"/>
    <property type="evidence" value="ECO:0007669"/>
    <property type="project" value="UniProtKB-SubCell"/>
</dbReference>
<dbReference type="GO" id="GO:0070728">
    <property type="term" value="F:L-leucine binding"/>
    <property type="evidence" value="ECO:0000318"/>
    <property type="project" value="GO_Central"/>
</dbReference>
<dbReference type="GO" id="GO:0016684">
    <property type="term" value="F:oxidoreductase activity, acting on peroxide as acceptor"/>
    <property type="evidence" value="ECO:0000318"/>
    <property type="project" value="GO_Central"/>
</dbReference>
<dbReference type="GO" id="GO:0071233">
    <property type="term" value="P:cellular response to L-leucine"/>
    <property type="evidence" value="ECO:0000318"/>
    <property type="project" value="GO_Central"/>
</dbReference>
<dbReference type="GO" id="GO:1990253">
    <property type="term" value="P:cellular response to leucine starvation"/>
    <property type="evidence" value="ECO:0000318"/>
    <property type="project" value="GO_Central"/>
</dbReference>
<dbReference type="GO" id="GO:1904262">
    <property type="term" value="P:negative regulation of TORC1 signaling"/>
    <property type="evidence" value="ECO:0000318"/>
    <property type="project" value="GO_Central"/>
</dbReference>
<dbReference type="GO" id="GO:0016239">
    <property type="term" value="P:positive regulation of macroautophagy"/>
    <property type="evidence" value="ECO:0000318"/>
    <property type="project" value="GO_Central"/>
</dbReference>
<dbReference type="GO" id="GO:1901031">
    <property type="term" value="P:regulation of response to reactive oxygen species"/>
    <property type="evidence" value="ECO:0007669"/>
    <property type="project" value="InterPro"/>
</dbReference>
<dbReference type="InterPro" id="IPR029032">
    <property type="entry name" value="AhpD-like"/>
</dbReference>
<dbReference type="InterPro" id="IPR006730">
    <property type="entry name" value="Sestrin"/>
</dbReference>
<dbReference type="PANTHER" id="PTHR12474">
    <property type="entry name" value="P53 REGULATED PA26 NUCLEAR PROTEIN SESTRIN"/>
    <property type="match status" value="1"/>
</dbReference>
<dbReference type="PANTHER" id="PTHR12474:SF0">
    <property type="entry name" value="SESTRIN HOMOLOG"/>
    <property type="match status" value="1"/>
</dbReference>
<dbReference type="Pfam" id="PF04636">
    <property type="entry name" value="PA26"/>
    <property type="match status" value="1"/>
</dbReference>
<dbReference type="SUPFAM" id="SSF69118">
    <property type="entry name" value="AhpD-like"/>
    <property type="match status" value="1"/>
</dbReference>
<reference key="1">
    <citation type="journal article" date="1998" name="Science">
        <title>Genome sequence of the nematode C. elegans: a platform for investigating biology.</title>
        <authorList>
            <consortium name="The C. elegans sequencing consortium"/>
        </authorList>
    </citation>
    <scope>NUCLEOTIDE SEQUENCE [LARGE SCALE GENOMIC DNA]</scope>
    <source>
        <strain>Bristol N2</strain>
    </source>
</reference>
<reference key="2">
    <citation type="journal article" date="2013" name="Exp. Gerontol.">
        <title>SESN-1 is a positive regulator of lifespan in Caenorhabditis elegans.</title>
        <authorList>
            <person name="Yang Y.L."/>
            <person name="Loh K.S."/>
            <person name="Liou B.Y."/>
            <person name="Chu I.H."/>
            <person name="Kuo C.J."/>
            <person name="Chen H.D."/>
            <person name="Chen C.S."/>
        </authorList>
    </citation>
    <scope>DISRUPTION PHENOTYPE</scope>
</reference>
<keyword id="KW-0963">Cytoplasm</keyword>
<keyword id="KW-0539">Nucleus</keyword>
<keyword id="KW-1185">Reference proteome</keyword>
<gene>
    <name evidence="5" type="primary">sesn-1</name>
    <name evidence="5" type="ORF">Y74C9A.5</name>
</gene>
<evidence type="ECO:0000250" key="1">
    <source>
        <dbReference type="UniProtKB" id="Q9W1K5"/>
    </source>
</evidence>
<evidence type="ECO:0000250" key="2">
    <source>
        <dbReference type="UniProtKB" id="Q9Y6P5"/>
    </source>
</evidence>
<evidence type="ECO:0000269" key="3">
    <source>
    </source>
</evidence>
<evidence type="ECO:0000305" key="4"/>
<evidence type="ECO:0000312" key="5">
    <source>
        <dbReference type="WormBase" id="Y74C9A.5"/>
    </source>
</evidence>
<protein>
    <recommendedName>
        <fullName evidence="4">Sestrin homolog</fullName>
    </recommendedName>
</protein>
<organism>
    <name type="scientific">Caenorhabditis elegans</name>
    <dbReference type="NCBI Taxonomy" id="6239"/>
    <lineage>
        <taxon>Eukaryota</taxon>
        <taxon>Metazoa</taxon>
        <taxon>Ecdysozoa</taxon>
        <taxon>Nematoda</taxon>
        <taxon>Chromadorea</taxon>
        <taxon>Rhabditida</taxon>
        <taxon>Rhabditina</taxon>
        <taxon>Rhabditomorpha</taxon>
        <taxon>Rhabditoidea</taxon>
        <taxon>Rhabditidae</taxon>
        <taxon>Peloderinae</taxon>
        <taxon>Caenorhabditis</taxon>
    </lineage>
</organism>
<comment type="function">
    <text evidence="1">May function as a negative feedback regulator of TOR function.</text>
</comment>
<comment type="subcellular location">
    <subcellularLocation>
        <location evidence="2">Nucleus</location>
    </subcellularLocation>
    <subcellularLocation>
        <location evidence="2">Cytoplasm</location>
    </subcellularLocation>
</comment>
<comment type="disruption phenotype">
    <text evidence="3">RNAi-mediated knockdown results in decreased lifespan.</text>
</comment>
<comment type="similarity">
    <text evidence="4">Belongs to the sestrin family.</text>
</comment>
<proteinExistence type="inferred from homology"/>
<accession>Q9N4D6</accession>
<feature type="chain" id="PRO_0000221185" description="Sestrin homolog">
    <location>
        <begin position="1"/>
        <end position="474"/>
    </location>
</feature>
<name>SESN1_CAEEL</name>
<sequence>MHTTTKRRKAMDWLNFDPIPEVDRLFRFTCKHPTLHVHMTGSYGHMFVDISDLPASARHYLALMAASRHRCLSLMDHHRRKFLEKGGQQMWLLGIDWSYMKFRKLDYLNRMLCHRPWMIHWKNLAVLFARRTPDGGPAFFSVCSLHHAVGIMSMTHAMCTVICCIGLERRVDLTQDEIDFLNIDDLDYWEARMSAYFRKVPDRRPTEVEYLISELKKTEKGQTRPPAKMCAMTTETIESLISAPAATYSSNRKNYSPVLLLANIDENGEDIMEKEPPCNYPIYSHHRTFGYIDFRKRPEKDIPPFRVEEFGWDHVYNTMNEYTDTLTSRLDRMFDHIRTLTGNMPSGSSHASGDGEPPAAVNQNEIDTAAFREAIWNYTQGLYGVRVDDYDYSKINRVLDKGTKTFIKLAACYPHKLTTEFTRALPGFKDSEKIHVVMMVAMARFQASMFHYTRAVCNYNAMCLSKKGWRKPLD</sequence>